<organism>
    <name type="scientific">Synechococcus elongatus (strain ATCC 33912 / PCC 7942 / FACHB-805)</name>
    <name type="common">Anacystis nidulans R2</name>
    <dbReference type="NCBI Taxonomy" id="1140"/>
    <lineage>
        <taxon>Bacteria</taxon>
        <taxon>Bacillati</taxon>
        <taxon>Cyanobacteriota</taxon>
        <taxon>Cyanophyceae</taxon>
        <taxon>Synechococcales</taxon>
        <taxon>Synechococcaceae</taxon>
        <taxon>Synechococcus</taxon>
    </lineage>
</organism>
<dbReference type="EC" id="2.7.7.3" evidence="1"/>
<dbReference type="EMBL" id="L19521">
    <property type="protein sequence ID" value="AAA16170.2"/>
    <property type="molecule type" value="Genomic_DNA"/>
</dbReference>
<dbReference type="EMBL" id="CP000100">
    <property type="protein sequence ID" value="ABB58037.1"/>
    <property type="molecule type" value="Genomic_DNA"/>
</dbReference>
<dbReference type="PIR" id="B53293">
    <property type="entry name" value="B53293"/>
</dbReference>
<dbReference type="RefSeq" id="WP_011244398.1">
    <property type="nucleotide sequence ID" value="NZ_JACJTX010000001.1"/>
</dbReference>
<dbReference type="SMR" id="Q55235"/>
<dbReference type="STRING" id="1140.Synpcc7942_2007"/>
<dbReference type="PaxDb" id="1140-Synpcc7942_2007"/>
<dbReference type="GeneID" id="72430881"/>
<dbReference type="KEGG" id="syf:Synpcc7942_2007"/>
<dbReference type="eggNOG" id="COG0669">
    <property type="taxonomic scope" value="Bacteria"/>
</dbReference>
<dbReference type="HOGENOM" id="CLU_100149_0_1_3"/>
<dbReference type="OrthoDB" id="9806661at2"/>
<dbReference type="BioCyc" id="SYNEL:SYNPCC7942_2007-MONOMER"/>
<dbReference type="UniPathway" id="UPA00241">
    <property type="reaction ID" value="UER00355"/>
</dbReference>
<dbReference type="Proteomes" id="UP000889800">
    <property type="component" value="Chromosome"/>
</dbReference>
<dbReference type="GO" id="GO:0005737">
    <property type="term" value="C:cytoplasm"/>
    <property type="evidence" value="ECO:0007669"/>
    <property type="project" value="UniProtKB-SubCell"/>
</dbReference>
<dbReference type="GO" id="GO:0005524">
    <property type="term" value="F:ATP binding"/>
    <property type="evidence" value="ECO:0007669"/>
    <property type="project" value="UniProtKB-KW"/>
</dbReference>
<dbReference type="GO" id="GO:0004595">
    <property type="term" value="F:pantetheine-phosphate adenylyltransferase activity"/>
    <property type="evidence" value="ECO:0007669"/>
    <property type="project" value="UniProtKB-UniRule"/>
</dbReference>
<dbReference type="GO" id="GO:0015937">
    <property type="term" value="P:coenzyme A biosynthetic process"/>
    <property type="evidence" value="ECO:0007669"/>
    <property type="project" value="UniProtKB-UniRule"/>
</dbReference>
<dbReference type="CDD" id="cd02163">
    <property type="entry name" value="PPAT"/>
    <property type="match status" value="1"/>
</dbReference>
<dbReference type="Gene3D" id="3.40.50.620">
    <property type="entry name" value="HUPs"/>
    <property type="match status" value="1"/>
</dbReference>
<dbReference type="HAMAP" id="MF_00151">
    <property type="entry name" value="PPAT_bact"/>
    <property type="match status" value="1"/>
</dbReference>
<dbReference type="InterPro" id="IPR004821">
    <property type="entry name" value="Cyt_trans-like"/>
</dbReference>
<dbReference type="InterPro" id="IPR001980">
    <property type="entry name" value="PPAT"/>
</dbReference>
<dbReference type="InterPro" id="IPR014729">
    <property type="entry name" value="Rossmann-like_a/b/a_fold"/>
</dbReference>
<dbReference type="NCBIfam" id="TIGR01510">
    <property type="entry name" value="coaD_prev_kdtB"/>
    <property type="match status" value="1"/>
</dbReference>
<dbReference type="NCBIfam" id="TIGR00125">
    <property type="entry name" value="cyt_tran_rel"/>
    <property type="match status" value="1"/>
</dbReference>
<dbReference type="PANTHER" id="PTHR21342">
    <property type="entry name" value="PHOSPHOPANTETHEINE ADENYLYLTRANSFERASE"/>
    <property type="match status" value="1"/>
</dbReference>
<dbReference type="PANTHER" id="PTHR21342:SF1">
    <property type="entry name" value="PHOSPHOPANTETHEINE ADENYLYLTRANSFERASE"/>
    <property type="match status" value="1"/>
</dbReference>
<dbReference type="Pfam" id="PF01467">
    <property type="entry name" value="CTP_transf_like"/>
    <property type="match status" value="1"/>
</dbReference>
<dbReference type="PRINTS" id="PR01020">
    <property type="entry name" value="LPSBIOSNTHSS"/>
</dbReference>
<dbReference type="SUPFAM" id="SSF52374">
    <property type="entry name" value="Nucleotidylyl transferase"/>
    <property type="match status" value="1"/>
</dbReference>
<proteinExistence type="inferred from homology"/>
<comment type="function">
    <text evidence="1">Reversibly transfers an adenylyl group from ATP to 4'-phosphopantetheine, yielding dephospho-CoA (dPCoA) and pyrophosphate.</text>
</comment>
<comment type="catalytic activity">
    <reaction evidence="1">
        <text>(R)-4'-phosphopantetheine + ATP + H(+) = 3'-dephospho-CoA + diphosphate</text>
        <dbReference type="Rhea" id="RHEA:19801"/>
        <dbReference type="ChEBI" id="CHEBI:15378"/>
        <dbReference type="ChEBI" id="CHEBI:30616"/>
        <dbReference type="ChEBI" id="CHEBI:33019"/>
        <dbReference type="ChEBI" id="CHEBI:57328"/>
        <dbReference type="ChEBI" id="CHEBI:61723"/>
        <dbReference type="EC" id="2.7.7.3"/>
    </reaction>
</comment>
<comment type="cofactor">
    <cofactor evidence="1">
        <name>Mg(2+)</name>
        <dbReference type="ChEBI" id="CHEBI:18420"/>
    </cofactor>
</comment>
<comment type="pathway">
    <text evidence="1">Cofactor biosynthesis; coenzyme A biosynthesis; CoA from (R)-pantothenate: step 4/5.</text>
</comment>
<comment type="subunit">
    <text evidence="1">Homohexamer.</text>
</comment>
<comment type="subcellular location">
    <subcellularLocation>
        <location evidence="1">Cytoplasm</location>
    </subcellularLocation>
</comment>
<comment type="similarity">
    <text evidence="1">Belongs to the bacterial CoaD family.</text>
</comment>
<keyword id="KW-0067">ATP-binding</keyword>
<keyword id="KW-0173">Coenzyme A biosynthesis</keyword>
<keyword id="KW-0963">Cytoplasm</keyword>
<keyword id="KW-0460">Magnesium</keyword>
<keyword id="KW-0547">Nucleotide-binding</keyword>
<keyword id="KW-0548">Nucleotidyltransferase</keyword>
<keyword id="KW-1185">Reference proteome</keyword>
<keyword id="KW-0808">Transferase</keyword>
<protein>
    <recommendedName>
        <fullName evidence="1">Phosphopantetheine adenylyltransferase</fullName>
        <ecNumber evidence="1">2.7.7.3</ecNumber>
    </recommendedName>
    <alternativeName>
        <fullName evidence="1">Dephospho-CoA pyrophosphorylase</fullName>
    </alternativeName>
    <alternativeName>
        <fullName evidence="1">Pantetheine-phosphate adenylyltransferase</fullName>
        <shortName evidence="1">PPAT</shortName>
    </alternativeName>
</protein>
<name>COAD_SYNE7</name>
<accession>Q55235</accession>
<accession>Q31LN2</accession>
<sequence>MNAIYPGSFDPITFGHLDIIERGCRLFDQVYVAVLRNPNKQPMFSVQERLEQIAKAIAHLPNAQVDSFEGLTVNYARQRQAGAILRGLRVLSDFELELQMANTNKTLASDLETVFLTTSTEYSFLSSSLVKEVARFGGNVEHFVPSHVAAALYDQFHPVVERDRLT</sequence>
<gene>
    <name evidence="1" type="primary">coaD</name>
    <name type="ordered locus">Synpcc7942_2007</name>
</gene>
<feature type="chain" id="PRO_0000156293" description="Phosphopantetheine adenylyltransferase">
    <location>
        <begin position="1"/>
        <end position="166"/>
    </location>
</feature>
<feature type="binding site" evidence="1">
    <location>
        <begin position="8"/>
        <end position="9"/>
    </location>
    <ligand>
        <name>ATP</name>
        <dbReference type="ChEBI" id="CHEBI:30616"/>
    </ligand>
</feature>
<feature type="binding site" evidence="1">
    <location>
        <position position="8"/>
    </location>
    <ligand>
        <name>substrate</name>
    </ligand>
</feature>
<feature type="binding site" evidence="1">
    <location>
        <position position="16"/>
    </location>
    <ligand>
        <name>ATP</name>
        <dbReference type="ChEBI" id="CHEBI:30616"/>
    </ligand>
</feature>
<feature type="binding site" evidence="1">
    <location>
        <position position="40"/>
    </location>
    <ligand>
        <name>substrate</name>
    </ligand>
</feature>
<feature type="binding site" evidence="1">
    <location>
        <position position="72"/>
    </location>
    <ligand>
        <name>substrate</name>
    </ligand>
</feature>
<feature type="binding site" evidence="1">
    <location>
        <position position="86"/>
    </location>
    <ligand>
        <name>substrate</name>
    </ligand>
</feature>
<feature type="binding site" evidence="1">
    <location>
        <begin position="87"/>
        <end position="89"/>
    </location>
    <ligand>
        <name>ATP</name>
        <dbReference type="ChEBI" id="CHEBI:30616"/>
    </ligand>
</feature>
<feature type="binding site" evidence="1">
    <location>
        <position position="97"/>
    </location>
    <ligand>
        <name>ATP</name>
        <dbReference type="ChEBI" id="CHEBI:30616"/>
    </ligand>
</feature>
<feature type="binding site" evidence="1">
    <location>
        <begin position="122"/>
        <end position="128"/>
    </location>
    <ligand>
        <name>ATP</name>
        <dbReference type="ChEBI" id="CHEBI:30616"/>
    </ligand>
</feature>
<feature type="site" description="Transition state stabilizer" evidence="1">
    <location>
        <position position="16"/>
    </location>
</feature>
<evidence type="ECO:0000255" key="1">
    <source>
        <dbReference type="HAMAP-Rule" id="MF_00151"/>
    </source>
</evidence>
<reference key="1">
    <citation type="journal article" date="1993" name="J. Bacteriol.">
        <title>Insertional inactivation of genes to isolate mutants of Synechococcus sp. strain PCC 7942: isolation of filamentous strains.</title>
        <authorList>
            <person name="Dolganov N."/>
            <person name="Grossman A.R."/>
        </authorList>
    </citation>
    <scope>NUCLEOTIDE SEQUENCE [GENOMIC DNA]</scope>
</reference>
<reference key="2">
    <citation type="submission" date="2005-08" db="EMBL/GenBank/DDBJ databases">
        <title>Complete sequence of chromosome 1 of Synechococcus elongatus PCC 7942.</title>
        <authorList>
            <consortium name="US DOE Joint Genome Institute"/>
            <person name="Copeland A."/>
            <person name="Lucas S."/>
            <person name="Lapidus A."/>
            <person name="Barry K."/>
            <person name="Detter J.C."/>
            <person name="Glavina T."/>
            <person name="Hammon N."/>
            <person name="Israni S."/>
            <person name="Pitluck S."/>
            <person name="Schmutz J."/>
            <person name="Larimer F."/>
            <person name="Land M."/>
            <person name="Kyrpides N."/>
            <person name="Lykidis A."/>
            <person name="Golden S."/>
            <person name="Richardson P."/>
        </authorList>
    </citation>
    <scope>NUCLEOTIDE SEQUENCE [LARGE SCALE GENOMIC DNA]</scope>
    <source>
        <strain>ATCC 33912 / PCC 7942 / FACHB-805</strain>
    </source>
</reference>